<accession>P28438</accession>
<proteinExistence type="inferred from homology"/>
<keyword id="KW-0113">Calvin cycle</keyword>
<keyword id="KW-0120">Carbon dioxide fixation</keyword>
<keyword id="KW-0150">Chloroplast</keyword>
<keyword id="KW-1015">Disulfide bond</keyword>
<keyword id="KW-0456">Lyase</keyword>
<keyword id="KW-0460">Magnesium</keyword>
<keyword id="KW-0479">Metal-binding</keyword>
<keyword id="KW-0488">Methylation</keyword>
<keyword id="KW-0503">Monooxygenase</keyword>
<keyword id="KW-0560">Oxidoreductase</keyword>
<keyword id="KW-0601">Photorespiration</keyword>
<keyword id="KW-0602">Photosynthesis</keyword>
<keyword id="KW-0934">Plastid</keyword>
<organism>
    <name type="scientific">Passiflora quadrangularis</name>
    <name type="common">Grenadine</name>
    <name type="synonym">Giant granadilla</name>
    <dbReference type="NCBI Taxonomy" id="3685"/>
    <lineage>
        <taxon>Eukaryota</taxon>
        <taxon>Viridiplantae</taxon>
        <taxon>Streptophyta</taxon>
        <taxon>Embryophyta</taxon>
        <taxon>Tracheophyta</taxon>
        <taxon>Spermatophyta</taxon>
        <taxon>Magnoliopsida</taxon>
        <taxon>eudicotyledons</taxon>
        <taxon>Gunneridae</taxon>
        <taxon>Pentapetalae</taxon>
        <taxon>rosids</taxon>
        <taxon>fabids</taxon>
        <taxon>Malpighiales</taxon>
        <taxon>Passifloraceae</taxon>
        <taxon>Passiflora</taxon>
    </lineage>
</organism>
<gene>
    <name evidence="1" type="primary">rbcL</name>
</gene>
<comment type="function">
    <text evidence="1">RuBisCO catalyzes two reactions: the carboxylation of D-ribulose 1,5-bisphosphate, the primary event in carbon dioxide fixation, as well as the oxidative fragmentation of the pentose substrate in the photorespiration process. Both reactions occur simultaneously and in competition at the same active site.</text>
</comment>
<comment type="catalytic activity">
    <reaction evidence="1">
        <text>2 (2R)-3-phosphoglycerate + 2 H(+) = D-ribulose 1,5-bisphosphate + CO2 + H2O</text>
        <dbReference type="Rhea" id="RHEA:23124"/>
        <dbReference type="ChEBI" id="CHEBI:15377"/>
        <dbReference type="ChEBI" id="CHEBI:15378"/>
        <dbReference type="ChEBI" id="CHEBI:16526"/>
        <dbReference type="ChEBI" id="CHEBI:57870"/>
        <dbReference type="ChEBI" id="CHEBI:58272"/>
        <dbReference type="EC" id="4.1.1.39"/>
    </reaction>
</comment>
<comment type="catalytic activity">
    <reaction evidence="1">
        <text>D-ribulose 1,5-bisphosphate + O2 = 2-phosphoglycolate + (2R)-3-phosphoglycerate + 2 H(+)</text>
        <dbReference type="Rhea" id="RHEA:36631"/>
        <dbReference type="ChEBI" id="CHEBI:15378"/>
        <dbReference type="ChEBI" id="CHEBI:15379"/>
        <dbReference type="ChEBI" id="CHEBI:57870"/>
        <dbReference type="ChEBI" id="CHEBI:58033"/>
        <dbReference type="ChEBI" id="CHEBI:58272"/>
    </reaction>
</comment>
<comment type="cofactor">
    <cofactor evidence="1">
        <name>Mg(2+)</name>
        <dbReference type="ChEBI" id="CHEBI:18420"/>
    </cofactor>
    <text evidence="1">Binds 1 Mg(2+) ion per subunit.</text>
</comment>
<comment type="subunit">
    <text evidence="1">Heterohexadecamer of 8 large chains and 8 small chains; disulfide-linked. The disulfide link is formed within the large subunit homodimers.</text>
</comment>
<comment type="subcellular location">
    <subcellularLocation>
        <location>Plastid</location>
        <location>Chloroplast</location>
    </subcellularLocation>
</comment>
<comment type="PTM">
    <text evidence="1">The disulfide bond which can form in the large chain dimeric partners within the hexadecamer appears to be associated with oxidative stress and protein turnover.</text>
</comment>
<comment type="miscellaneous">
    <text evidence="1">The basic functional RuBisCO is composed of a large chain homodimer in a 'head-to-tail' conformation. In form I RuBisCO this homodimer is arranged in a barrel-like tetramer with the small subunits forming a tetrameric 'cap' on each end of the 'barrel'.</text>
</comment>
<comment type="similarity">
    <text evidence="1">Belongs to the RuBisCO large chain family. Type I subfamily.</text>
</comment>
<sequence length="465" mass="51459">VGFKAGVKDYKLTYYTPEYNPKDTDILAAFRVTPQPGVPAEEAGAAVAAESSTGTWTTVWTDGLTSLDRYKGRCYDIEPVAGEESQFIAYVAYPLDLFEEGSVTNMFTSIVGNVFGFKALXXLRLEDLRIPPAYSKTFQGPPHGIQVERDKLNKYGRPLLGCTIKPKLGLSAKNYGRAVYECLRGGLDFTKDDENVNSQPFMRWRDRFLFCAEAIYKAQAETGEIKGHYLNATAGTCEEMMKRAIFARELGVPIVMHDYLTGGFTANTSLARYCRDNGLLLHIHRAMHAVIDRQKNHGMHFRVLAKALRMSGGDHIHAGTVVGKLEGERDITLGFVDLLRDDFVEKDRSRGIYFTQDWVSLPGVIPVASGGIHVWHMPALTEIFGDDSVLQFGGGTLGHPWGNAPGAVANRVALEACVQARNEGRDLAREGNEIIRSAAKWSPELAAACEVWKEIKFEFPAMDTL</sequence>
<geneLocation type="chloroplast"/>
<reference key="1">
    <citation type="journal article" date="1992" name="Science">
        <title>Carnivorous plants: phylogeny and structural evolution.</title>
        <authorList>
            <person name="Albert V.A."/>
            <person name="Williams S.E."/>
            <person name="Chase M.W."/>
        </authorList>
    </citation>
    <scope>NUCLEOTIDE SEQUENCE [GENOMIC DNA]</scope>
</reference>
<dbReference type="EC" id="4.1.1.39" evidence="1"/>
<dbReference type="EMBL" id="L01940">
    <property type="protein sequence ID" value="AAB52708.2"/>
    <property type="molecule type" value="Genomic_DNA"/>
</dbReference>
<dbReference type="GO" id="GO:0009507">
    <property type="term" value="C:chloroplast"/>
    <property type="evidence" value="ECO:0007669"/>
    <property type="project" value="UniProtKB-SubCell"/>
</dbReference>
<dbReference type="GO" id="GO:0000287">
    <property type="term" value="F:magnesium ion binding"/>
    <property type="evidence" value="ECO:0007669"/>
    <property type="project" value="InterPro"/>
</dbReference>
<dbReference type="GO" id="GO:0004497">
    <property type="term" value="F:monooxygenase activity"/>
    <property type="evidence" value="ECO:0007669"/>
    <property type="project" value="UniProtKB-KW"/>
</dbReference>
<dbReference type="GO" id="GO:0016984">
    <property type="term" value="F:ribulose-bisphosphate carboxylase activity"/>
    <property type="evidence" value="ECO:0007669"/>
    <property type="project" value="UniProtKB-EC"/>
</dbReference>
<dbReference type="GO" id="GO:0009853">
    <property type="term" value="P:photorespiration"/>
    <property type="evidence" value="ECO:0007669"/>
    <property type="project" value="UniProtKB-KW"/>
</dbReference>
<dbReference type="GO" id="GO:0019253">
    <property type="term" value="P:reductive pentose-phosphate cycle"/>
    <property type="evidence" value="ECO:0007669"/>
    <property type="project" value="UniProtKB-KW"/>
</dbReference>
<dbReference type="CDD" id="cd08212">
    <property type="entry name" value="RuBisCO_large_I"/>
    <property type="match status" value="1"/>
</dbReference>
<dbReference type="FunFam" id="3.20.20.110:FF:000001">
    <property type="entry name" value="Ribulose bisphosphate carboxylase large chain"/>
    <property type="match status" value="1"/>
</dbReference>
<dbReference type="FunFam" id="3.30.70.150:FF:000001">
    <property type="entry name" value="Ribulose bisphosphate carboxylase large chain"/>
    <property type="match status" value="1"/>
</dbReference>
<dbReference type="Gene3D" id="3.20.20.110">
    <property type="entry name" value="Ribulose bisphosphate carboxylase, large subunit, C-terminal domain"/>
    <property type="match status" value="1"/>
</dbReference>
<dbReference type="Gene3D" id="3.30.70.150">
    <property type="entry name" value="RuBisCO large subunit, N-terminal domain"/>
    <property type="match status" value="1"/>
</dbReference>
<dbReference type="HAMAP" id="MF_01338">
    <property type="entry name" value="RuBisCO_L_type1"/>
    <property type="match status" value="1"/>
</dbReference>
<dbReference type="InterPro" id="IPR033966">
    <property type="entry name" value="RuBisCO"/>
</dbReference>
<dbReference type="InterPro" id="IPR020878">
    <property type="entry name" value="RuBisCo_large_chain_AS"/>
</dbReference>
<dbReference type="InterPro" id="IPR000685">
    <property type="entry name" value="RuBisCO_lsu_C"/>
</dbReference>
<dbReference type="InterPro" id="IPR036376">
    <property type="entry name" value="RuBisCO_lsu_C_sf"/>
</dbReference>
<dbReference type="InterPro" id="IPR017443">
    <property type="entry name" value="RuBisCO_lsu_fd_N"/>
</dbReference>
<dbReference type="InterPro" id="IPR036422">
    <property type="entry name" value="RuBisCO_lsu_N_sf"/>
</dbReference>
<dbReference type="InterPro" id="IPR020888">
    <property type="entry name" value="RuBisCO_lsuI"/>
</dbReference>
<dbReference type="NCBIfam" id="NF003252">
    <property type="entry name" value="PRK04208.1"/>
    <property type="match status" value="1"/>
</dbReference>
<dbReference type="PANTHER" id="PTHR42704">
    <property type="entry name" value="RIBULOSE BISPHOSPHATE CARBOXYLASE"/>
    <property type="match status" value="1"/>
</dbReference>
<dbReference type="PANTHER" id="PTHR42704:SF17">
    <property type="entry name" value="RIBULOSE BISPHOSPHATE CARBOXYLASE LARGE CHAIN"/>
    <property type="match status" value="1"/>
</dbReference>
<dbReference type="Pfam" id="PF00016">
    <property type="entry name" value="RuBisCO_large"/>
    <property type="match status" value="1"/>
</dbReference>
<dbReference type="Pfam" id="PF02788">
    <property type="entry name" value="RuBisCO_large_N"/>
    <property type="match status" value="1"/>
</dbReference>
<dbReference type="SFLD" id="SFLDG01052">
    <property type="entry name" value="RuBisCO"/>
    <property type="match status" value="1"/>
</dbReference>
<dbReference type="SFLD" id="SFLDS00014">
    <property type="entry name" value="RuBisCO"/>
    <property type="match status" value="1"/>
</dbReference>
<dbReference type="SFLD" id="SFLDG00301">
    <property type="entry name" value="RuBisCO-like_proteins"/>
    <property type="match status" value="1"/>
</dbReference>
<dbReference type="SUPFAM" id="SSF51649">
    <property type="entry name" value="RuBisCo, C-terminal domain"/>
    <property type="match status" value="1"/>
</dbReference>
<dbReference type="SUPFAM" id="SSF54966">
    <property type="entry name" value="RuBisCO, large subunit, small (N-terminal) domain"/>
    <property type="match status" value="1"/>
</dbReference>
<dbReference type="PROSITE" id="PS00157">
    <property type="entry name" value="RUBISCO_LARGE"/>
    <property type="match status" value="1"/>
</dbReference>
<feature type="chain" id="PRO_0000062557" description="Ribulose bisphosphate carboxylase large chain">
    <location>
        <begin position="1" status="less than"/>
        <end position="465"/>
    </location>
</feature>
<feature type="active site" description="Proton acceptor" evidence="1">
    <location>
        <position position="165"/>
    </location>
</feature>
<feature type="active site" description="Proton acceptor" evidence="1">
    <location>
        <position position="284"/>
    </location>
</feature>
<feature type="binding site" description="in homodimeric partner" evidence="1">
    <location>
        <position position="113"/>
    </location>
    <ligand>
        <name>substrate</name>
    </ligand>
</feature>
<feature type="binding site" evidence="1">
    <location>
        <position position="163"/>
    </location>
    <ligand>
        <name>substrate</name>
    </ligand>
</feature>
<feature type="binding site" evidence="1">
    <location>
        <position position="167"/>
    </location>
    <ligand>
        <name>substrate</name>
    </ligand>
</feature>
<feature type="binding site" description="via carbamate group" evidence="1">
    <location>
        <position position="191"/>
    </location>
    <ligand>
        <name>Mg(2+)</name>
        <dbReference type="ChEBI" id="CHEBI:18420"/>
    </ligand>
</feature>
<feature type="binding site" evidence="1">
    <location>
        <position position="193"/>
    </location>
    <ligand>
        <name>Mg(2+)</name>
        <dbReference type="ChEBI" id="CHEBI:18420"/>
    </ligand>
</feature>
<feature type="binding site" evidence="1">
    <location>
        <position position="194"/>
    </location>
    <ligand>
        <name>Mg(2+)</name>
        <dbReference type="ChEBI" id="CHEBI:18420"/>
    </ligand>
</feature>
<feature type="binding site" evidence="1">
    <location>
        <position position="285"/>
    </location>
    <ligand>
        <name>substrate</name>
    </ligand>
</feature>
<feature type="binding site" evidence="1">
    <location>
        <position position="317"/>
    </location>
    <ligand>
        <name>substrate</name>
    </ligand>
</feature>
<feature type="binding site" evidence="1">
    <location>
        <position position="369"/>
    </location>
    <ligand>
        <name>substrate</name>
    </ligand>
</feature>
<feature type="site" description="Transition state stabilizer" evidence="1">
    <location>
        <position position="324"/>
    </location>
</feature>
<feature type="modified residue" description="N6,N6,N6-trimethyllysine" evidence="1">
    <location>
        <position position="4"/>
    </location>
</feature>
<feature type="modified residue" description="N6-carboxylysine" evidence="1">
    <location>
        <position position="191"/>
    </location>
</feature>
<feature type="disulfide bond" description="Interchain; in linked form" evidence="1">
    <location>
        <position position="237"/>
    </location>
</feature>
<feature type="non-terminal residue">
    <location>
        <position position="1"/>
    </location>
</feature>
<name>RBL_PASQU</name>
<evidence type="ECO:0000255" key="1">
    <source>
        <dbReference type="HAMAP-Rule" id="MF_01338"/>
    </source>
</evidence>
<protein>
    <recommendedName>
        <fullName evidence="1">Ribulose bisphosphate carboxylase large chain</fullName>
        <shortName evidence="1">RuBisCO large subunit</shortName>
        <ecNumber evidence="1">4.1.1.39</ecNumber>
    </recommendedName>
</protein>